<keyword id="KW-0963">Cytoplasm</keyword>
<keyword id="KW-0507">mRNA processing</keyword>
<keyword id="KW-0509">mRNA transport</keyword>
<keyword id="KW-0539">Nucleus</keyword>
<keyword id="KW-1185">Reference proteome</keyword>
<keyword id="KW-0677">Repeat</keyword>
<keyword id="KW-0694">RNA-binding</keyword>
<keyword id="KW-0810">Translation regulation</keyword>
<keyword id="KW-0813">Transport</keyword>
<name>PABP_CANGA</name>
<gene>
    <name type="primary">PAB1</name>
    <name type="ordered locus">CAGL0L11792g</name>
</gene>
<accession>Q6FKG4</accession>
<reference key="1">
    <citation type="journal article" date="2004" name="Nature">
        <title>Genome evolution in yeasts.</title>
        <authorList>
            <person name="Dujon B."/>
            <person name="Sherman D."/>
            <person name="Fischer G."/>
            <person name="Durrens P."/>
            <person name="Casaregola S."/>
            <person name="Lafontaine I."/>
            <person name="de Montigny J."/>
            <person name="Marck C."/>
            <person name="Neuveglise C."/>
            <person name="Talla E."/>
            <person name="Goffard N."/>
            <person name="Frangeul L."/>
            <person name="Aigle M."/>
            <person name="Anthouard V."/>
            <person name="Babour A."/>
            <person name="Barbe V."/>
            <person name="Barnay S."/>
            <person name="Blanchin S."/>
            <person name="Beckerich J.-M."/>
            <person name="Beyne E."/>
            <person name="Bleykasten C."/>
            <person name="Boisrame A."/>
            <person name="Boyer J."/>
            <person name="Cattolico L."/>
            <person name="Confanioleri F."/>
            <person name="de Daruvar A."/>
            <person name="Despons L."/>
            <person name="Fabre E."/>
            <person name="Fairhead C."/>
            <person name="Ferry-Dumazet H."/>
            <person name="Groppi A."/>
            <person name="Hantraye F."/>
            <person name="Hennequin C."/>
            <person name="Jauniaux N."/>
            <person name="Joyet P."/>
            <person name="Kachouri R."/>
            <person name="Kerrest A."/>
            <person name="Koszul R."/>
            <person name="Lemaire M."/>
            <person name="Lesur I."/>
            <person name="Ma L."/>
            <person name="Muller H."/>
            <person name="Nicaud J.-M."/>
            <person name="Nikolski M."/>
            <person name="Oztas S."/>
            <person name="Ozier-Kalogeropoulos O."/>
            <person name="Pellenz S."/>
            <person name="Potier S."/>
            <person name="Richard G.-F."/>
            <person name="Straub M.-L."/>
            <person name="Suleau A."/>
            <person name="Swennen D."/>
            <person name="Tekaia F."/>
            <person name="Wesolowski-Louvel M."/>
            <person name="Westhof E."/>
            <person name="Wirth B."/>
            <person name="Zeniou-Meyer M."/>
            <person name="Zivanovic Y."/>
            <person name="Bolotin-Fukuhara M."/>
            <person name="Thierry A."/>
            <person name="Bouchier C."/>
            <person name="Caudron B."/>
            <person name="Scarpelli C."/>
            <person name="Gaillardin C."/>
            <person name="Weissenbach J."/>
            <person name="Wincker P."/>
            <person name="Souciet J.-L."/>
        </authorList>
    </citation>
    <scope>NUCLEOTIDE SEQUENCE [LARGE SCALE GENOMIC DNA]</scope>
    <source>
        <strain>ATCC 2001 / BCRC 20586 / JCM 3761 / NBRC 0622 / NRRL Y-65 / CBS 138</strain>
    </source>
</reference>
<organism>
    <name type="scientific">Candida glabrata (strain ATCC 2001 / BCRC 20586 / JCM 3761 / NBRC 0622 / NRRL Y-65 / CBS 138)</name>
    <name type="common">Yeast</name>
    <name type="synonym">Nakaseomyces glabratus</name>
    <dbReference type="NCBI Taxonomy" id="284593"/>
    <lineage>
        <taxon>Eukaryota</taxon>
        <taxon>Fungi</taxon>
        <taxon>Dikarya</taxon>
        <taxon>Ascomycota</taxon>
        <taxon>Saccharomycotina</taxon>
        <taxon>Saccharomycetes</taxon>
        <taxon>Saccharomycetales</taxon>
        <taxon>Saccharomycetaceae</taxon>
        <taxon>Nakaseomyces</taxon>
    </lineage>
</organism>
<dbReference type="EMBL" id="CR380958">
    <property type="protein sequence ID" value="CAG62254.1"/>
    <property type="molecule type" value="Genomic_DNA"/>
</dbReference>
<dbReference type="RefSeq" id="XP_449280.1">
    <property type="nucleotide sequence ID" value="XM_449280.1"/>
</dbReference>
<dbReference type="SMR" id="Q6FKG4"/>
<dbReference type="FunCoup" id="Q6FKG4">
    <property type="interactions" value="1550"/>
</dbReference>
<dbReference type="STRING" id="284593.Q6FKG4"/>
<dbReference type="EnsemblFungi" id="CAGL0L11792g-T">
    <property type="protein sequence ID" value="CAGL0L11792g-T-p1"/>
    <property type="gene ID" value="CAGL0L11792g"/>
</dbReference>
<dbReference type="KEGG" id="cgr:2890944"/>
<dbReference type="CGD" id="CAL0135516">
    <property type="gene designation" value="CAGL0L11792g"/>
</dbReference>
<dbReference type="VEuPathDB" id="FungiDB:B1J91_L11792g"/>
<dbReference type="VEuPathDB" id="FungiDB:CAGL0L11792g"/>
<dbReference type="eggNOG" id="KOG0123">
    <property type="taxonomic scope" value="Eukaryota"/>
</dbReference>
<dbReference type="HOGENOM" id="CLU_012062_22_4_1"/>
<dbReference type="InParanoid" id="Q6FKG4"/>
<dbReference type="OMA" id="NATYSMA"/>
<dbReference type="Proteomes" id="UP000002428">
    <property type="component" value="Chromosome L"/>
</dbReference>
<dbReference type="GO" id="GO:0010494">
    <property type="term" value="C:cytoplasmic stress granule"/>
    <property type="evidence" value="ECO:0007669"/>
    <property type="project" value="EnsemblFungi"/>
</dbReference>
<dbReference type="GO" id="GO:0071014">
    <property type="term" value="C:post-mRNA release spliceosomal complex"/>
    <property type="evidence" value="ECO:0007669"/>
    <property type="project" value="EnsemblFungi"/>
</dbReference>
<dbReference type="GO" id="GO:0005840">
    <property type="term" value="C:ribosome"/>
    <property type="evidence" value="ECO:0007669"/>
    <property type="project" value="EnsemblFungi"/>
</dbReference>
<dbReference type="GO" id="GO:0140693">
    <property type="term" value="F:molecular condensate scaffold activity"/>
    <property type="evidence" value="ECO:0007669"/>
    <property type="project" value="EnsemblFungi"/>
</dbReference>
<dbReference type="GO" id="GO:0008143">
    <property type="term" value="F:poly(A) binding"/>
    <property type="evidence" value="ECO:0007669"/>
    <property type="project" value="EnsemblFungi"/>
</dbReference>
<dbReference type="GO" id="GO:1990841">
    <property type="term" value="F:promoter-specific chromatin binding"/>
    <property type="evidence" value="ECO:0007669"/>
    <property type="project" value="EnsemblFungi"/>
</dbReference>
<dbReference type="GO" id="GO:0008428">
    <property type="term" value="F:ribonuclease inhibitor activity"/>
    <property type="evidence" value="ECO:0007669"/>
    <property type="project" value="EnsemblFungi"/>
</dbReference>
<dbReference type="GO" id="GO:0031124">
    <property type="term" value="P:mRNA 3'-end processing"/>
    <property type="evidence" value="ECO:0007669"/>
    <property type="project" value="EnsemblFungi"/>
</dbReference>
<dbReference type="GO" id="GO:0051028">
    <property type="term" value="P:mRNA transport"/>
    <property type="evidence" value="ECO:0007669"/>
    <property type="project" value="UniProtKB-KW"/>
</dbReference>
<dbReference type="GO" id="GO:0000289">
    <property type="term" value="P:nuclear-transcribed mRNA poly(A) tail shortening"/>
    <property type="evidence" value="ECO:0007669"/>
    <property type="project" value="EnsemblFungi"/>
</dbReference>
<dbReference type="GO" id="GO:0060211">
    <property type="term" value="P:regulation of nuclear-transcribed mRNA poly(A) tail shortening"/>
    <property type="evidence" value="ECO:0007669"/>
    <property type="project" value="EnsemblFungi"/>
</dbReference>
<dbReference type="GO" id="GO:0006446">
    <property type="term" value="P:regulation of translational initiation"/>
    <property type="evidence" value="ECO:0007669"/>
    <property type="project" value="EnsemblFungi"/>
</dbReference>
<dbReference type="CDD" id="cd12378">
    <property type="entry name" value="RRM1_I_PABPs"/>
    <property type="match status" value="1"/>
</dbReference>
<dbReference type="CDD" id="cd12379">
    <property type="entry name" value="RRM2_I_PABPs"/>
    <property type="match status" value="1"/>
</dbReference>
<dbReference type="CDD" id="cd12380">
    <property type="entry name" value="RRM3_I_PABPs"/>
    <property type="match status" value="1"/>
</dbReference>
<dbReference type="CDD" id="cd12381">
    <property type="entry name" value="RRM4_I_PABPs"/>
    <property type="match status" value="1"/>
</dbReference>
<dbReference type="FunFam" id="3.30.70.330:FF:000003">
    <property type="entry name" value="Polyadenylate-binding protein"/>
    <property type="match status" value="1"/>
</dbReference>
<dbReference type="FunFam" id="3.30.70.330:FF:000211">
    <property type="entry name" value="Polyadenylate-binding protein"/>
    <property type="match status" value="1"/>
</dbReference>
<dbReference type="FunFam" id="3.30.70.330:FF:000648">
    <property type="entry name" value="Polyadenylate-binding protein"/>
    <property type="match status" value="1"/>
</dbReference>
<dbReference type="Gene3D" id="3.30.70.330">
    <property type="match status" value="4"/>
</dbReference>
<dbReference type="Gene3D" id="1.10.1900.10">
    <property type="entry name" value="c-terminal domain of poly(a) binding protein"/>
    <property type="match status" value="1"/>
</dbReference>
<dbReference type="InterPro" id="IPR012677">
    <property type="entry name" value="Nucleotide-bd_a/b_plait_sf"/>
</dbReference>
<dbReference type="InterPro" id="IPR036053">
    <property type="entry name" value="PABP-dom"/>
</dbReference>
<dbReference type="InterPro" id="IPR006515">
    <property type="entry name" value="PABP_1234"/>
</dbReference>
<dbReference type="InterPro" id="IPR002004">
    <property type="entry name" value="PABP_HYD_C"/>
</dbReference>
<dbReference type="InterPro" id="IPR034364">
    <property type="entry name" value="PABP_RRM1"/>
</dbReference>
<dbReference type="InterPro" id="IPR035979">
    <property type="entry name" value="RBD_domain_sf"/>
</dbReference>
<dbReference type="InterPro" id="IPR045305">
    <property type="entry name" value="RRM2_I_PABPs"/>
</dbReference>
<dbReference type="InterPro" id="IPR000504">
    <property type="entry name" value="RRM_dom"/>
</dbReference>
<dbReference type="InterPro" id="IPR003954">
    <property type="entry name" value="RRM_dom_euk"/>
</dbReference>
<dbReference type="NCBIfam" id="TIGR01628">
    <property type="entry name" value="PABP-1234"/>
    <property type="match status" value="1"/>
</dbReference>
<dbReference type="PANTHER" id="PTHR24012">
    <property type="entry name" value="RNA BINDING PROTEIN"/>
    <property type="match status" value="1"/>
</dbReference>
<dbReference type="Pfam" id="PF00658">
    <property type="entry name" value="MLLE"/>
    <property type="match status" value="1"/>
</dbReference>
<dbReference type="Pfam" id="PF00076">
    <property type="entry name" value="RRM_1"/>
    <property type="match status" value="4"/>
</dbReference>
<dbReference type="SMART" id="SM00517">
    <property type="entry name" value="PolyA"/>
    <property type="match status" value="1"/>
</dbReference>
<dbReference type="SMART" id="SM00360">
    <property type="entry name" value="RRM"/>
    <property type="match status" value="4"/>
</dbReference>
<dbReference type="SMART" id="SM00361">
    <property type="entry name" value="RRM_1"/>
    <property type="match status" value="4"/>
</dbReference>
<dbReference type="SUPFAM" id="SSF63570">
    <property type="entry name" value="PABC (PABP) domain"/>
    <property type="match status" value="1"/>
</dbReference>
<dbReference type="SUPFAM" id="SSF54928">
    <property type="entry name" value="RNA-binding domain, RBD"/>
    <property type="match status" value="2"/>
</dbReference>
<dbReference type="PROSITE" id="PS51309">
    <property type="entry name" value="PABC"/>
    <property type="match status" value="1"/>
</dbReference>
<dbReference type="PROSITE" id="PS50102">
    <property type="entry name" value="RRM"/>
    <property type="match status" value="4"/>
</dbReference>
<sequence length="579" mass="64667">MADITEKTAEQLENLSLQDKQEGTNEENQSETVSASLYVGDLDPSVSEAHLYDIFSPIGAVSSIRVCRDAITKTSLGYAYVNFNDHDAAKTAIEKLNFTPIKGKLCRIMWSQRDPSLRKKGAGNIFIKNLHPDIDNKALYDTFSVFGNILSSKVATDETGKSKGFGYVHFEEDESASEAIDALNGMLLNGQEIYVGPHLSKKERESKFEEMKANFTNVYIKNINTETTDKEFEELVAKFGKTDSVVLERTPEGENKGFGFVNFVNHEDAVKCVEELNNTEFKGQPLYVNRAQKKYERQQELKKQYEATRMEKMAKYQGINLFIKNLDDSIDDKKLEEEFAPYGTITSAKVMTTENGKSKGFGFVCFSTPEEATKAITEKNQQIVAGKPLYVAIAQRKDVRRSQLAQQIQARNQMRFQQASAAAAAAAAAGMPGQFMPPMFYGVMPPRGVPFNGPNPQMANMGAMPKNGMPPHQFRNGPVYGVPPQGGFARNGPAANQFYQQKQRQALGEELYKRIFSRTNDEEAAGKITGMILDLPPQEVVPLLENDELFEQHFKEASAAYESFKQEQQQPQGEEAQQA</sequence>
<evidence type="ECO:0000250" key="1"/>
<evidence type="ECO:0000255" key="2">
    <source>
        <dbReference type="PROSITE-ProRule" id="PRU00176"/>
    </source>
</evidence>
<evidence type="ECO:0000255" key="3">
    <source>
        <dbReference type="PROSITE-ProRule" id="PRU00641"/>
    </source>
</evidence>
<evidence type="ECO:0000256" key="4">
    <source>
        <dbReference type="SAM" id="MobiDB-lite"/>
    </source>
</evidence>
<evidence type="ECO:0000305" key="5"/>
<comment type="function">
    <text evidence="1">Binds the poly(A) tail of mRNA. Appears to be an important mediator of the multiple roles of the poly(A) tail in mRNA biogenesis, stability and translation. In the nucleus, involved in both mRNA cleavage and polyadenylation. Is also required for efficient mRNA export to the cytoplasm. Acts in concert with a poly(A)-specific nuclease (PAN) to affect poly(A) tail shortening, which may occur concomitantly with either nucleocytoplasmic mRNA transport or translational initiation. In the cytoplasm, stimulates translation initiation and regulates mRNA decay through translation termination-coupled poly(A) shortening, probably mediated by PAN (By similarity).</text>
</comment>
<comment type="subcellular location">
    <subcellularLocation>
        <location evidence="1">Cytoplasm</location>
    </subcellularLocation>
    <subcellularLocation>
        <location evidence="1">Nucleus</location>
    </subcellularLocation>
</comment>
<comment type="similarity">
    <text evidence="5">Belongs to the polyadenylate-binding protein type-1 family.</text>
</comment>
<proteinExistence type="inferred from homology"/>
<feature type="chain" id="PRO_0000295385" description="Polyadenylate-binding protein, cytoplasmic and nuclear">
    <location>
        <begin position="1"/>
        <end position="579"/>
    </location>
</feature>
<feature type="domain" description="RRM 1" evidence="2">
    <location>
        <begin position="35"/>
        <end position="113"/>
    </location>
</feature>
<feature type="domain" description="RRM 2" evidence="2">
    <location>
        <begin position="123"/>
        <end position="200"/>
    </location>
</feature>
<feature type="domain" description="RRM 3" evidence="2">
    <location>
        <begin position="216"/>
        <end position="293"/>
    </location>
</feature>
<feature type="domain" description="RRM 4" evidence="2">
    <location>
        <begin position="319"/>
        <end position="396"/>
    </location>
</feature>
<feature type="domain" description="PABC" evidence="3">
    <location>
        <begin position="487"/>
        <end position="566"/>
    </location>
</feature>
<feature type="region of interest" description="Disordered" evidence="4">
    <location>
        <begin position="1"/>
        <end position="32"/>
    </location>
</feature>
<feature type="region of interest" description="Disordered" evidence="4">
    <location>
        <begin position="560"/>
        <end position="579"/>
    </location>
</feature>
<feature type="compositionally biased region" description="Basic and acidic residues" evidence="4">
    <location>
        <begin position="1"/>
        <end position="10"/>
    </location>
</feature>
<feature type="compositionally biased region" description="Low complexity" evidence="4">
    <location>
        <begin position="566"/>
        <end position="579"/>
    </location>
</feature>
<protein>
    <recommendedName>
        <fullName>Polyadenylate-binding protein, cytoplasmic and nuclear</fullName>
        <shortName>PABP</shortName>
        <shortName>Poly(A)-binding protein</shortName>
    </recommendedName>
    <alternativeName>
        <fullName>Polyadenylate tail-binding protein</fullName>
    </alternativeName>
</protein>